<reference key="1">
    <citation type="journal article" date="1990" name="Nucleic Acids Res.">
        <title>Nucleotide sequence of the psbA gene encoded by the Vicia faba chloroplast genome.</title>
        <authorList>
            <person name="Ko K."/>
        </authorList>
    </citation>
    <scope>NUCLEOTIDE SEQUENCE [GENOMIC DNA]</scope>
</reference>
<reference key="2">
    <citation type="submission" date="2003-02" db="EMBL/GenBank/DDBJ databases">
        <authorList>
            <person name="Ko K."/>
        </authorList>
    </citation>
    <scope>SEQUENCE REVISION TO 11; 104; 108 AND 215</scope>
</reference>
<reference key="3">
    <citation type="journal article" date="1990" name="Nucleic Acids Res.">
        <title>Sequence of the trnH gene and the inverted repeat structure deletion site of the broad bean chloroplast genome.</title>
        <authorList>
            <person name="Herdenberger F."/>
            <person name="Pillay D.T.N."/>
            <person name="Steinmetz A."/>
        </authorList>
    </citation>
    <scope>NUCLEOTIDE SEQUENCE [GENOMIC DNA] OF 341-353</scope>
</reference>
<name>PSBA_VICFA</name>
<comment type="function">
    <text evidence="1">Photosystem II (PSII) is a light-driven water:plastoquinone oxidoreductase that uses light energy to abstract electrons from H(2)O, generating O(2) and a proton gradient subsequently used for ATP formation. It consists of a core antenna complex that captures photons, and an electron transfer chain that converts photonic excitation into a charge separation. The D1/D2 (PsbA/PsbD) reaction center heterodimer binds P680, the primary electron donor of PSII as well as several subsequent electron acceptors.</text>
</comment>
<comment type="catalytic activity">
    <reaction evidence="1">
        <text>2 a plastoquinone + 4 hnu + 2 H2O = 2 a plastoquinol + O2</text>
        <dbReference type="Rhea" id="RHEA:36359"/>
        <dbReference type="Rhea" id="RHEA-COMP:9561"/>
        <dbReference type="Rhea" id="RHEA-COMP:9562"/>
        <dbReference type="ChEBI" id="CHEBI:15377"/>
        <dbReference type="ChEBI" id="CHEBI:15379"/>
        <dbReference type="ChEBI" id="CHEBI:17757"/>
        <dbReference type="ChEBI" id="CHEBI:30212"/>
        <dbReference type="ChEBI" id="CHEBI:62192"/>
        <dbReference type="EC" id="1.10.3.9"/>
    </reaction>
</comment>
<comment type="cofactor">
    <text evidence="1">The D1/D2 heterodimer binds P680, chlorophylls that are the primary electron donor of PSII, and subsequent electron acceptors. It shares a non-heme iron and each subunit binds pheophytin, quinone, additional chlorophylls, carotenoids and lipids. D1 provides most of the ligands for the Mn4-Ca-O5 cluster of the oxygen-evolving complex (OEC). There is also a Cl(-1) ion associated with D1 and D2, which is required for oxygen evolution. The PSII complex binds additional chlorophylls, carotenoids and specific lipids.</text>
</comment>
<comment type="subunit">
    <text evidence="1">PSII is composed of 1 copy each of membrane proteins PsbA, PsbB, PsbC, PsbD, PsbE, PsbF, PsbH, PsbI, PsbJ, PsbK, PsbL, PsbM, PsbT, PsbX, PsbY, PsbZ, Psb30/Ycf12, at least 3 peripheral proteins of the oxygen-evolving complex and a large number of cofactors. It forms dimeric complexes.</text>
</comment>
<comment type="subcellular location">
    <subcellularLocation>
        <location evidence="1">Plastid</location>
        <location evidence="1">Chloroplast thylakoid membrane</location>
        <topology evidence="1">Multi-pass membrane protein</topology>
    </subcellularLocation>
</comment>
<comment type="PTM">
    <text evidence="1">Tyr-161 forms a radical intermediate that is referred to as redox-active TyrZ, YZ or Y-Z.</text>
</comment>
<comment type="PTM">
    <text evidence="1">C-terminally processed by CTPA; processing is essential to allow assembly of the oxygen-evolving complex and thus photosynthetic growth.</text>
</comment>
<comment type="miscellaneous">
    <text evidence="1">2 of the reaction center chlorophylls (ChlD1 and ChlD2) are entirely coordinated by water.</text>
</comment>
<comment type="miscellaneous">
    <text evidence="1">Herbicides such as atrazine, BNT, diuron or ioxynil bind in the Q(B) binding site and block subsequent electron transfer.</text>
</comment>
<comment type="similarity">
    <text evidence="1">Belongs to the reaction center PufL/M/PsbA/D family.</text>
</comment>
<gene>
    <name evidence="1" type="primary">psbA</name>
</gene>
<sequence>MTAILERRDSENLWGRFCNWITTTENRLYIGWFGVLMIPTLLTATSVFIIAFIAAPPVDIDGIREPVSGSLLYGNNIISGAIIPTSAVIGLHFYPIWEAASVDEWLYNGGPYELIVLHFLLGVACYMGREWELSFRLGMRPWIVVAYSAPVAAATAVFLIYPIGQGSFSDGMPLGISGTFNFMIVFQAEHNILMHPFHMLGVAGVFGGSLFSAMHGSLVTSSLIRETTENESANEGYRFGQEEETYNIVAAHGYFGRLIFQYASFNNSRSLHFFLAAWPVVGIWFTALGISTMAFNLNGFNFNQSVVDSQGRVINTWADIINRANLGMEVMHERNAHNFPLDLAAVDAPSISG</sequence>
<evidence type="ECO:0000255" key="1">
    <source>
        <dbReference type="HAMAP-Rule" id="MF_01379"/>
    </source>
</evidence>
<evidence type="ECO:0000305" key="2"/>
<geneLocation type="chloroplast"/>
<organism>
    <name type="scientific">Vicia faba</name>
    <name type="common">Broad bean</name>
    <name type="synonym">Faba vulgaris</name>
    <dbReference type="NCBI Taxonomy" id="3906"/>
    <lineage>
        <taxon>Eukaryota</taxon>
        <taxon>Viridiplantae</taxon>
        <taxon>Streptophyta</taxon>
        <taxon>Embryophyta</taxon>
        <taxon>Tracheophyta</taxon>
        <taxon>Spermatophyta</taxon>
        <taxon>Magnoliopsida</taxon>
        <taxon>eudicotyledons</taxon>
        <taxon>Gunneridae</taxon>
        <taxon>Pentapetalae</taxon>
        <taxon>rosids</taxon>
        <taxon>fabids</taxon>
        <taxon>Fabales</taxon>
        <taxon>Fabaceae</taxon>
        <taxon>Papilionoideae</taxon>
        <taxon>50 kb inversion clade</taxon>
        <taxon>NPAAA clade</taxon>
        <taxon>Hologalegina</taxon>
        <taxon>IRL clade</taxon>
        <taxon>Fabeae</taxon>
        <taxon>Vicia</taxon>
    </lineage>
</organism>
<protein>
    <recommendedName>
        <fullName evidence="1">Photosystem II protein D1</fullName>
        <shortName evidence="1">PSII D1 protein</shortName>
        <ecNumber evidence="1">1.10.3.9</ecNumber>
    </recommendedName>
    <alternativeName>
        <fullName evidence="1">Photosystem II Q(B) protein</fullName>
    </alternativeName>
</protein>
<keyword id="KW-0007">Acetylation</keyword>
<keyword id="KW-0106">Calcium</keyword>
<keyword id="KW-0148">Chlorophyll</keyword>
<keyword id="KW-0150">Chloroplast</keyword>
<keyword id="KW-0157">Chromophore</keyword>
<keyword id="KW-0249">Electron transport</keyword>
<keyword id="KW-0359">Herbicide resistance</keyword>
<keyword id="KW-0408">Iron</keyword>
<keyword id="KW-0460">Magnesium</keyword>
<keyword id="KW-0464">Manganese</keyword>
<keyword id="KW-0472">Membrane</keyword>
<keyword id="KW-0479">Metal-binding</keyword>
<keyword id="KW-0560">Oxidoreductase</keyword>
<keyword id="KW-0597">Phosphoprotein</keyword>
<keyword id="KW-0602">Photosynthesis</keyword>
<keyword id="KW-0604">Photosystem II</keyword>
<keyword id="KW-0934">Plastid</keyword>
<keyword id="KW-0793">Thylakoid</keyword>
<keyword id="KW-0812">Transmembrane</keyword>
<keyword id="KW-1133">Transmembrane helix</keyword>
<keyword id="KW-0813">Transport</keyword>
<feature type="initiator methionine" description="Removed" evidence="1">
    <location>
        <position position="1"/>
    </location>
</feature>
<feature type="chain" id="PRO_0000090474" description="Photosystem II protein D1" evidence="1">
    <location>
        <begin position="2"/>
        <end position="344"/>
    </location>
</feature>
<feature type="propeptide" id="PRO_0000316488" evidence="1">
    <location>
        <begin position="345"/>
        <end position="353"/>
    </location>
</feature>
<feature type="transmembrane region" description="Helical" evidence="1">
    <location>
        <begin position="29"/>
        <end position="46"/>
    </location>
</feature>
<feature type="transmembrane region" description="Helical" evidence="1">
    <location>
        <begin position="118"/>
        <end position="133"/>
    </location>
</feature>
<feature type="transmembrane region" description="Helical" evidence="1">
    <location>
        <begin position="142"/>
        <end position="156"/>
    </location>
</feature>
<feature type="transmembrane region" description="Helical" evidence="1">
    <location>
        <begin position="197"/>
        <end position="218"/>
    </location>
</feature>
<feature type="transmembrane region" description="Helical" evidence="1">
    <location>
        <begin position="274"/>
        <end position="288"/>
    </location>
</feature>
<feature type="binding site" description="axial binding residue" evidence="1">
    <location>
        <position position="118"/>
    </location>
    <ligand>
        <name>chlorophyll a</name>
        <dbReference type="ChEBI" id="CHEBI:58416"/>
        <label>ChlzD1</label>
    </ligand>
    <ligandPart>
        <name>Mg</name>
        <dbReference type="ChEBI" id="CHEBI:25107"/>
    </ligandPart>
</feature>
<feature type="binding site" evidence="1">
    <location>
        <position position="126"/>
    </location>
    <ligand>
        <name>pheophytin a</name>
        <dbReference type="ChEBI" id="CHEBI:136840"/>
        <label>D1</label>
    </ligand>
</feature>
<feature type="binding site" evidence="1">
    <location>
        <position position="170"/>
    </location>
    <ligand>
        <name>[CaMn4O5] cluster</name>
        <dbReference type="ChEBI" id="CHEBI:189552"/>
    </ligand>
</feature>
<feature type="binding site" evidence="1">
    <location>
        <position position="189"/>
    </location>
    <ligand>
        <name>[CaMn4O5] cluster</name>
        <dbReference type="ChEBI" id="CHEBI:189552"/>
    </ligand>
</feature>
<feature type="binding site" description="axial binding residue" evidence="1">
    <location>
        <position position="198"/>
    </location>
    <ligand>
        <name>chlorophyll a</name>
        <dbReference type="ChEBI" id="CHEBI:58416"/>
        <label>PD1</label>
    </ligand>
    <ligandPart>
        <name>Mg</name>
        <dbReference type="ChEBI" id="CHEBI:25107"/>
    </ligandPart>
</feature>
<feature type="binding site" evidence="1">
    <location>
        <position position="215"/>
    </location>
    <ligand>
        <name>a quinone</name>
        <dbReference type="ChEBI" id="CHEBI:132124"/>
        <label>B</label>
    </ligand>
</feature>
<feature type="binding site" evidence="1">
    <location>
        <position position="215"/>
    </location>
    <ligand>
        <name>Fe cation</name>
        <dbReference type="ChEBI" id="CHEBI:24875"/>
        <note>ligand shared with heterodimeric partner</note>
    </ligand>
</feature>
<feature type="binding site" evidence="1">
    <location>
        <begin position="264"/>
        <end position="265"/>
    </location>
    <ligand>
        <name>a quinone</name>
        <dbReference type="ChEBI" id="CHEBI:132124"/>
        <label>B</label>
    </ligand>
</feature>
<feature type="binding site" evidence="1">
    <location>
        <position position="272"/>
    </location>
    <ligand>
        <name>Fe cation</name>
        <dbReference type="ChEBI" id="CHEBI:24875"/>
        <note>ligand shared with heterodimeric partner</note>
    </ligand>
</feature>
<feature type="binding site" evidence="1">
    <location>
        <position position="332"/>
    </location>
    <ligand>
        <name>[CaMn4O5] cluster</name>
        <dbReference type="ChEBI" id="CHEBI:189552"/>
    </ligand>
</feature>
<feature type="binding site" evidence="1">
    <location>
        <position position="333"/>
    </location>
    <ligand>
        <name>[CaMn4O5] cluster</name>
        <dbReference type="ChEBI" id="CHEBI:189552"/>
    </ligand>
</feature>
<feature type="binding site" evidence="1">
    <location>
        <position position="342"/>
    </location>
    <ligand>
        <name>[CaMn4O5] cluster</name>
        <dbReference type="ChEBI" id="CHEBI:189552"/>
    </ligand>
</feature>
<feature type="binding site" evidence="1">
    <location>
        <position position="344"/>
    </location>
    <ligand>
        <name>[CaMn4O5] cluster</name>
        <dbReference type="ChEBI" id="CHEBI:189552"/>
    </ligand>
</feature>
<feature type="site" description="Tyrosine radical intermediate" evidence="1">
    <location>
        <position position="161"/>
    </location>
</feature>
<feature type="site" description="Stabilizes free radical intermediate" evidence="1">
    <location>
        <position position="190"/>
    </location>
</feature>
<feature type="site" description="Cleavage; by CTPA" evidence="1">
    <location>
        <begin position="344"/>
        <end position="345"/>
    </location>
</feature>
<feature type="modified residue" description="N-acetylthreonine" evidence="1">
    <location>
        <position position="2"/>
    </location>
</feature>
<feature type="modified residue" description="Phosphothreonine" evidence="1">
    <location>
        <position position="2"/>
    </location>
</feature>
<feature type="sequence conflict" description="In Ref. 3; CAA35835." evidence="2" ref="3">
    <original>D</original>
    <variation>E</variation>
    <location>
        <position position="347"/>
    </location>
</feature>
<feature type="sequence conflict" description="In Ref. 3; CAA35835." evidence="2" ref="3">
    <original>S</original>
    <variation>N</variation>
    <location>
        <position position="352"/>
    </location>
</feature>
<dbReference type="EC" id="1.10.3.9" evidence="1"/>
<dbReference type="EMBL" id="X17694">
    <property type="protein sequence ID" value="CAA35688.2"/>
    <property type="molecule type" value="Genomic_DNA"/>
</dbReference>
<dbReference type="EMBL" id="X51471">
    <property type="protein sequence ID" value="CAA35835.1"/>
    <property type="molecule type" value="Genomic_DNA"/>
</dbReference>
<dbReference type="PIR" id="S14911">
    <property type="entry name" value="F2VFD1"/>
</dbReference>
<dbReference type="SMR" id="P13910"/>
<dbReference type="GO" id="GO:0009535">
    <property type="term" value="C:chloroplast thylakoid membrane"/>
    <property type="evidence" value="ECO:0007669"/>
    <property type="project" value="UniProtKB-SubCell"/>
</dbReference>
<dbReference type="GO" id="GO:0009523">
    <property type="term" value="C:photosystem II"/>
    <property type="evidence" value="ECO:0007669"/>
    <property type="project" value="UniProtKB-KW"/>
</dbReference>
<dbReference type="GO" id="GO:0016168">
    <property type="term" value="F:chlorophyll binding"/>
    <property type="evidence" value="ECO:0007669"/>
    <property type="project" value="UniProtKB-UniRule"/>
</dbReference>
<dbReference type="GO" id="GO:0045156">
    <property type="term" value="F:electron transporter, transferring electrons within the cyclic electron transport pathway of photosynthesis activity"/>
    <property type="evidence" value="ECO:0007669"/>
    <property type="project" value="InterPro"/>
</dbReference>
<dbReference type="GO" id="GO:0005506">
    <property type="term" value="F:iron ion binding"/>
    <property type="evidence" value="ECO:0007669"/>
    <property type="project" value="UniProtKB-UniRule"/>
</dbReference>
<dbReference type="GO" id="GO:0016682">
    <property type="term" value="F:oxidoreductase activity, acting on diphenols and related substances as donors, oxygen as acceptor"/>
    <property type="evidence" value="ECO:0007669"/>
    <property type="project" value="UniProtKB-UniRule"/>
</dbReference>
<dbReference type="GO" id="GO:0010242">
    <property type="term" value="F:oxygen evolving activity"/>
    <property type="evidence" value="ECO:0007669"/>
    <property type="project" value="UniProtKB-EC"/>
</dbReference>
<dbReference type="GO" id="GO:0009772">
    <property type="term" value="P:photosynthetic electron transport in photosystem II"/>
    <property type="evidence" value="ECO:0007669"/>
    <property type="project" value="InterPro"/>
</dbReference>
<dbReference type="GO" id="GO:0009635">
    <property type="term" value="P:response to herbicide"/>
    <property type="evidence" value="ECO:0007669"/>
    <property type="project" value="UniProtKB-KW"/>
</dbReference>
<dbReference type="CDD" id="cd09289">
    <property type="entry name" value="Photosystem-II_D1"/>
    <property type="match status" value="1"/>
</dbReference>
<dbReference type="FunFam" id="1.20.85.10:FF:000002">
    <property type="entry name" value="Photosystem II protein D1"/>
    <property type="match status" value="1"/>
</dbReference>
<dbReference type="Gene3D" id="1.20.85.10">
    <property type="entry name" value="Photosystem II protein D1-like"/>
    <property type="match status" value="1"/>
</dbReference>
<dbReference type="HAMAP" id="MF_01379">
    <property type="entry name" value="PSII_PsbA_D1"/>
    <property type="match status" value="1"/>
</dbReference>
<dbReference type="InterPro" id="IPR055266">
    <property type="entry name" value="D1/D2"/>
</dbReference>
<dbReference type="InterPro" id="IPR036854">
    <property type="entry name" value="Photo_II_D1/D2_sf"/>
</dbReference>
<dbReference type="InterPro" id="IPR000484">
    <property type="entry name" value="Photo_RC_L/M"/>
</dbReference>
<dbReference type="InterPro" id="IPR055265">
    <property type="entry name" value="Photo_RC_L/M_CS"/>
</dbReference>
<dbReference type="InterPro" id="IPR005867">
    <property type="entry name" value="PSII_D1"/>
</dbReference>
<dbReference type="NCBIfam" id="TIGR01151">
    <property type="entry name" value="psbA"/>
    <property type="match status" value="1"/>
</dbReference>
<dbReference type="PANTHER" id="PTHR33149:SF12">
    <property type="entry name" value="PHOTOSYSTEM II D2 PROTEIN"/>
    <property type="match status" value="1"/>
</dbReference>
<dbReference type="PANTHER" id="PTHR33149">
    <property type="entry name" value="PHOTOSYSTEM II PROTEIN D1"/>
    <property type="match status" value="1"/>
</dbReference>
<dbReference type="Pfam" id="PF00124">
    <property type="entry name" value="Photo_RC"/>
    <property type="match status" value="1"/>
</dbReference>
<dbReference type="PRINTS" id="PR00256">
    <property type="entry name" value="REACTNCENTRE"/>
</dbReference>
<dbReference type="SUPFAM" id="SSF81483">
    <property type="entry name" value="Bacterial photosystem II reaction centre, L and M subunits"/>
    <property type="match status" value="1"/>
</dbReference>
<dbReference type="PROSITE" id="PS00244">
    <property type="entry name" value="REACTION_CENTER"/>
    <property type="match status" value="1"/>
</dbReference>
<proteinExistence type="inferred from homology"/>
<accession>P13910</accession>